<comment type="function">
    <text>Hydrolyzes cytokinin glucosides thus liberating free cytokinins.</text>
</comment>
<sequence>MAEVDLCALFFNLRVKDVTSSDELKKHILSASDERNPLTEPGENQSMDVDEEGGTRDPGILYLYVDCPTMMQCFYGTSFPYNSRHGALLTNLPPYQKDVSLSEVSRGLRQASGFFGYEDPIRSAYFAALSFPGHVAKLDEQMELTSTNGESLTFDLYASDQLRLEPGAWVRHGECKFGMN</sequence>
<proteinExistence type="predicted"/>
<reference key="1">
    <citation type="journal article" date="1986" name="Nature">
        <title>An Agrobacterium transformation in the evolution of the genus Nicotiana.</title>
        <authorList>
            <person name="Furner I.J."/>
            <person name="Huffman G.A."/>
            <person name="Amasino R.M."/>
            <person name="Garfinkel D.J."/>
            <person name="Gordon M.P."/>
            <person name="Nester E.W."/>
        </authorList>
    </citation>
    <scope>NUCLEOTIDE SEQUENCE [GENOMIC DNA]</scope>
</reference>
<protein>
    <recommendedName>
        <fullName>Cytokinin-beta-glucosidase</fullName>
        <ecNumber>3.2.1.-</ecNumber>
    </recommendedName>
    <alternativeName>
        <fullName>Protein ROL C</fullName>
    </alternativeName>
</protein>
<feature type="chain" id="PRO_0000097402" description="Cytokinin-beta-glucosidase">
    <location>
        <begin position="1"/>
        <end position="180"/>
    </location>
</feature>
<feature type="region of interest" description="Disordered" evidence="1">
    <location>
        <begin position="31"/>
        <end position="54"/>
    </location>
</feature>
<keyword id="KW-0203">Cytokinin biosynthesis</keyword>
<keyword id="KW-0326">Glycosidase</keyword>
<keyword id="KW-0378">Hydrolase</keyword>
<gene>
    <name type="primary">ROLC</name>
</gene>
<evidence type="ECO:0000256" key="1">
    <source>
        <dbReference type="SAM" id="MobiDB-lite"/>
    </source>
</evidence>
<dbReference type="EC" id="3.2.1.-"/>
<dbReference type="EMBL" id="X03432">
    <property type="protein sequence ID" value="CAA27160.1"/>
    <property type="molecule type" value="Genomic_DNA"/>
</dbReference>
<dbReference type="PIR" id="D27259">
    <property type="entry name" value="D27259"/>
</dbReference>
<dbReference type="SMR" id="P07051"/>
<dbReference type="GO" id="GO:0008422">
    <property type="term" value="F:beta-glucosidase activity"/>
    <property type="evidence" value="ECO:0007669"/>
    <property type="project" value="InterPro"/>
</dbReference>
<dbReference type="GO" id="GO:0005975">
    <property type="term" value="P:carbohydrate metabolic process"/>
    <property type="evidence" value="ECO:0007669"/>
    <property type="project" value="InterPro"/>
</dbReference>
<dbReference type="GO" id="GO:0009691">
    <property type="term" value="P:cytokinin biosynthetic process"/>
    <property type="evidence" value="ECO:0007669"/>
    <property type="project" value="UniProtKB-KW"/>
</dbReference>
<dbReference type="InterPro" id="IPR006065">
    <property type="entry name" value="Glyco_hydro_41"/>
</dbReference>
<dbReference type="InterPro" id="IPR006064">
    <property type="entry name" value="Glycosidase"/>
</dbReference>
<dbReference type="Pfam" id="PF02027">
    <property type="entry name" value="RolB_RolC"/>
    <property type="match status" value="1"/>
</dbReference>
<dbReference type="PRINTS" id="PR00746">
    <property type="entry name" value="GLHYDRLASE41"/>
</dbReference>
<name>ROLC_NICGL</name>
<accession>P07051</accession>
<organism>
    <name type="scientific">Nicotiana glauca</name>
    <name type="common">Glaucous tobacco</name>
    <name type="synonym">Tree tobacco</name>
    <dbReference type="NCBI Taxonomy" id="4090"/>
    <lineage>
        <taxon>Eukaryota</taxon>
        <taxon>Viridiplantae</taxon>
        <taxon>Streptophyta</taxon>
        <taxon>Embryophyta</taxon>
        <taxon>Tracheophyta</taxon>
        <taxon>Spermatophyta</taxon>
        <taxon>Magnoliopsida</taxon>
        <taxon>eudicotyledons</taxon>
        <taxon>Gunneridae</taxon>
        <taxon>Pentapetalae</taxon>
        <taxon>asterids</taxon>
        <taxon>lamiids</taxon>
        <taxon>Solanales</taxon>
        <taxon>Solanaceae</taxon>
        <taxon>Nicotianoideae</taxon>
        <taxon>Nicotianeae</taxon>
        <taxon>Nicotiana</taxon>
    </lineage>
</organism>